<feature type="chain" id="PRO_1000000921" description="Adenylosuccinate synthetase">
    <location>
        <begin position="1"/>
        <end position="432"/>
    </location>
</feature>
<feature type="active site" description="Proton acceptor" evidence="1">
    <location>
        <position position="13"/>
    </location>
</feature>
<feature type="active site" description="Proton donor" evidence="1">
    <location>
        <position position="41"/>
    </location>
</feature>
<feature type="binding site" evidence="1">
    <location>
        <begin position="12"/>
        <end position="18"/>
    </location>
    <ligand>
        <name>GTP</name>
        <dbReference type="ChEBI" id="CHEBI:37565"/>
    </ligand>
</feature>
<feature type="binding site" description="in other chain" evidence="1">
    <location>
        <begin position="13"/>
        <end position="16"/>
    </location>
    <ligand>
        <name>IMP</name>
        <dbReference type="ChEBI" id="CHEBI:58053"/>
        <note>ligand shared between dimeric partners</note>
    </ligand>
</feature>
<feature type="binding site" evidence="1">
    <location>
        <position position="13"/>
    </location>
    <ligand>
        <name>Mg(2+)</name>
        <dbReference type="ChEBI" id="CHEBI:18420"/>
    </ligand>
</feature>
<feature type="binding site" description="in other chain" evidence="1">
    <location>
        <begin position="38"/>
        <end position="41"/>
    </location>
    <ligand>
        <name>IMP</name>
        <dbReference type="ChEBI" id="CHEBI:58053"/>
        <note>ligand shared between dimeric partners</note>
    </ligand>
</feature>
<feature type="binding site" evidence="1">
    <location>
        <begin position="40"/>
        <end position="42"/>
    </location>
    <ligand>
        <name>GTP</name>
        <dbReference type="ChEBI" id="CHEBI:37565"/>
    </ligand>
</feature>
<feature type="binding site" evidence="1">
    <location>
        <position position="40"/>
    </location>
    <ligand>
        <name>Mg(2+)</name>
        <dbReference type="ChEBI" id="CHEBI:18420"/>
    </ligand>
</feature>
<feature type="binding site" description="in other chain" evidence="1">
    <location>
        <position position="132"/>
    </location>
    <ligand>
        <name>IMP</name>
        <dbReference type="ChEBI" id="CHEBI:58053"/>
        <note>ligand shared between dimeric partners</note>
    </ligand>
</feature>
<feature type="binding site" evidence="1">
    <location>
        <position position="146"/>
    </location>
    <ligand>
        <name>IMP</name>
        <dbReference type="ChEBI" id="CHEBI:58053"/>
        <note>ligand shared between dimeric partners</note>
    </ligand>
</feature>
<feature type="binding site" description="in other chain" evidence="1">
    <location>
        <position position="226"/>
    </location>
    <ligand>
        <name>IMP</name>
        <dbReference type="ChEBI" id="CHEBI:58053"/>
        <note>ligand shared between dimeric partners</note>
    </ligand>
</feature>
<feature type="binding site" description="in other chain" evidence="1">
    <location>
        <position position="241"/>
    </location>
    <ligand>
        <name>IMP</name>
        <dbReference type="ChEBI" id="CHEBI:58053"/>
        <note>ligand shared between dimeric partners</note>
    </ligand>
</feature>
<feature type="binding site" evidence="1">
    <location>
        <begin position="301"/>
        <end position="307"/>
    </location>
    <ligand>
        <name>substrate</name>
    </ligand>
</feature>
<feature type="binding site" description="in other chain" evidence="1">
    <location>
        <position position="305"/>
    </location>
    <ligand>
        <name>IMP</name>
        <dbReference type="ChEBI" id="CHEBI:58053"/>
        <note>ligand shared between dimeric partners</note>
    </ligand>
</feature>
<feature type="binding site" evidence="1">
    <location>
        <position position="307"/>
    </location>
    <ligand>
        <name>GTP</name>
        <dbReference type="ChEBI" id="CHEBI:37565"/>
    </ligand>
</feature>
<feature type="binding site" evidence="1">
    <location>
        <begin position="333"/>
        <end position="335"/>
    </location>
    <ligand>
        <name>GTP</name>
        <dbReference type="ChEBI" id="CHEBI:37565"/>
    </ligand>
</feature>
<feature type="binding site" evidence="1">
    <location>
        <begin position="415"/>
        <end position="417"/>
    </location>
    <ligand>
        <name>GTP</name>
        <dbReference type="ChEBI" id="CHEBI:37565"/>
    </ligand>
</feature>
<evidence type="ECO:0000255" key="1">
    <source>
        <dbReference type="HAMAP-Rule" id="MF_00011"/>
    </source>
</evidence>
<gene>
    <name evidence="1" type="primary">purA</name>
    <name type="ordered locus">Smed_2616</name>
</gene>
<accession>A6UCR6</accession>
<comment type="function">
    <text evidence="1">Plays an important role in the de novo pathway of purine nucleotide biosynthesis. Catalyzes the first committed step in the biosynthesis of AMP from IMP.</text>
</comment>
<comment type="catalytic activity">
    <reaction evidence="1">
        <text>IMP + L-aspartate + GTP = N(6)-(1,2-dicarboxyethyl)-AMP + GDP + phosphate + 2 H(+)</text>
        <dbReference type="Rhea" id="RHEA:15753"/>
        <dbReference type="ChEBI" id="CHEBI:15378"/>
        <dbReference type="ChEBI" id="CHEBI:29991"/>
        <dbReference type="ChEBI" id="CHEBI:37565"/>
        <dbReference type="ChEBI" id="CHEBI:43474"/>
        <dbReference type="ChEBI" id="CHEBI:57567"/>
        <dbReference type="ChEBI" id="CHEBI:58053"/>
        <dbReference type="ChEBI" id="CHEBI:58189"/>
        <dbReference type="EC" id="6.3.4.4"/>
    </reaction>
</comment>
<comment type="cofactor">
    <cofactor evidence="1">
        <name>Mg(2+)</name>
        <dbReference type="ChEBI" id="CHEBI:18420"/>
    </cofactor>
    <text evidence="1">Binds 1 Mg(2+) ion per subunit.</text>
</comment>
<comment type="pathway">
    <text evidence="1">Purine metabolism; AMP biosynthesis via de novo pathway; AMP from IMP: step 1/2.</text>
</comment>
<comment type="subunit">
    <text evidence="1">Homodimer.</text>
</comment>
<comment type="subcellular location">
    <subcellularLocation>
        <location evidence="1">Cytoplasm</location>
    </subcellularLocation>
</comment>
<comment type="similarity">
    <text evidence="1">Belongs to the adenylosuccinate synthetase family.</text>
</comment>
<keyword id="KW-0963">Cytoplasm</keyword>
<keyword id="KW-0342">GTP-binding</keyword>
<keyword id="KW-0436">Ligase</keyword>
<keyword id="KW-0460">Magnesium</keyword>
<keyword id="KW-0479">Metal-binding</keyword>
<keyword id="KW-0547">Nucleotide-binding</keyword>
<keyword id="KW-0658">Purine biosynthesis</keyword>
<sequence length="432" mass="46432">MTNVVVVGSQWGDEGKGKIVDWLSERADIVVRFQGGHNAGHTLVIDGVSYKLSLLPSGVVRSGKLAVIGNGVVIDPHALIAEIDRLAAQGVTVTPQNLRIADNATLILSLHRELDGIREDAASNSGTKIGTTRRGIGPAYEDKVGRRAIRVMDLADLDTLPAKVDRLLTHHNALRRGLGEAEISHRAIMDELSSVAARVLPFMDTIWLLLDRERRKGARILFEGAQGTLLDIDHGTYPFVTSSNTVAGQAAAGSGMGPGSLGYILGITKAYTTRVGEGPFPTELDDEVGRFLGERGHEFGTVTGRKRRCGWFDAALVRQSVAANGITGIALTKLDVLDGLDELKICVGYTLDGQQIDHLPASQAQQALAKPVYITLEGWKESTVGARSWAELPAQAIKYVRQVEELIGAPVALLSTSPERDDTILVTDPFED</sequence>
<organism>
    <name type="scientific">Sinorhizobium medicae (strain WSM419)</name>
    <name type="common">Ensifer medicae</name>
    <dbReference type="NCBI Taxonomy" id="366394"/>
    <lineage>
        <taxon>Bacteria</taxon>
        <taxon>Pseudomonadati</taxon>
        <taxon>Pseudomonadota</taxon>
        <taxon>Alphaproteobacteria</taxon>
        <taxon>Hyphomicrobiales</taxon>
        <taxon>Rhizobiaceae</taxon>
        <taxon>Sinorhizobium/Ensifer group</taxon>
        <taxon>Sinorhizobium</taxon>
    </lineage>
</organism>
<dbReference type="EC" id="6.3.4.4" evidence="1"/>
<dbReference type="EMBL" id="CP000738">
    <property type="protein sequence ID" value="ABR61446.1"/>
    <property type="molecule type" value="Genomic_DNA"/>
</dbReference>
<dbReference type="RefSeq" id="WP_012066835.1">
    <property type="nucleotide sequence ID" value="NC_009636.1"/>
</dbReference>
<dbReference type="RefSeq" id="YP_001328281.1">
    <property type="nucleotide sequence ID" value="NC_009636.1"/>
</dbReference>
<dbReference type="SMR" id="A6UCR6"/>
<dbReference type="STRING" id="366394.Smed_2616"/>
<dbReference type="KEGG" id="smd:Smed_2616"/>
<dbReference type="PATRIC" id="fig|366394.8.peg.5811"/>
<dbReference type="eggNOG" id="COG0104">
    <property type="taxonomic scope" value="Bacteria"/>
</dbReference>
<dbReference type="HOGENOM" id="CLU_029848_0_0_5"/>
<dbReference type="OrthoDB" id="9807553at2"/>
<dbReference type="UniPathway" id="UPA00075">
    <property type="reaction ID" value="UER00335"/>
</dbReference>
<dbReference type="Proteomes" id="UP000001108">
    <property type="component" value="Chromosome"/>
</dbReference>
<dbReference type="GO" id="GO:0005737">
    <property type="term" value="C:cytoplasm"/>
    <property type="evidence" value="ECO:0007669"/>
    <property type="project" value="UniProtKB-SubCell"/>
</dbReference>
<dbReference type="GO" id="GO:0004019">
    <property type="term" value="F:adenylosuccinate synthase activity"/>
    <property type="evidence" value="ECO:0007669"/>
    <property type="project" value="UniProtKB-UniRule"/>
</dbReference>
<dbReference type="GO" id="GO:0005525">
    <property type="term" value="F:GTP binding"/>
    <property type="evidence" value="ECO:0007669"/>
    <property type="project" value="UniProtKB-UniRule"/>
</dbReference>
<dbReference type="GO" id="GO:0000287">
    <property type="term" value="F:magnesium ion binding"/>
    <property type="evidence" value="ECO:0007669"/>
    <property type="project" value="UniProtKB-UniRule"/>
</dbReference>
<dbReference type="GO" id="GO:0044208">
    <property type="term" value="P:'de novo' AMP biosynthetic process"/>
    <property type="evidence" value="ECO:0007669"/>
    <property type="project" value="UniProtKB-UniRule"/>
</dbReference>
<dbReference type="GO" id="GO:0046040">
    <property type="term" value="P:IMP metabolic process"/>
    <property type="evidence" value="ECO:0007669"/>
    <property type="project" value="TreeGrafter"/>
</dbReference>
<dbReference type="CDD" id="cd03108">
    <property type="entry name" value="AdSS"/>
    <property type="match status" value="1"/>
</dbReference>
<dbReference type="FunFam" id="1.10.300.10:FF:000001">
    <property type="entry name" value="Adenylosuccinate synthetase"/>
    <property type="match status" value="1"/>
</dbReference>
<dbReference type="FunFam" id="3.90.170.10:FF:000001">
    <property type="entry name" value="Adenylosuccinate synthetase"/>
    <property type="match status" value="1"/>
</dbReference>
<dbReference type="Gene3D" id="3.40.440.10">
    <property type="entry name" value="Adenylosuccinate Synthetase, subunit A, domain 1"/>
    <property type="match status" value="1"/>
</dbReference>
<dbReference type="Gene3D" id="1.10.300.10">
    <property type="entry name" value="Adenylosuccinate Synthetase, subunit A, domain 2"/>
    <property type="match status" value="1"/>
</dbReference>
<dbReference type="Gene3D" id="3.90.170.10">
    <property type="entry name" value="Adenylosuccinate Synthetase, subunit A, domain 3"/>
    <property type="match status" value="1"/>
</dbReference>
<dbReference type="HAMAP" id="MF_00011">
    <property type="entry name" value="Adenylosucc_synth"/>
    <property type="match status" value="1"/>
</dbReference>
<dbReference type="InterPro" id="IPR018220">
    <property type="entry name" value="Adenylosuccin_syn_GTP-bd"/>
</dbReference>
<dbReference type="InterPro" id="IPR033128">
    <property type="entry name" value="Adenylosuccin_syn_Lys_AS"/>
</dbReference>
<dbReference type="InterPro" id="IPR042109">
    <property type="entry name" value="Adenylosuccinate_synth_dom1"/>
</dbReference>
<dbReference type="InterPro" id="IPR042110">
    <property type="entry name" value="Adenylosuccinate_synth_dom2"/>
</dbReference>
<dbReference type="InterPro" id="IPR042111">
    <property type="entry name" value="Adenylosuccinate_synth_dom3"/>
</dbReference>
<dbReference type="InterPro" id="IPR001114">
    <property type="entry name" value="Adenylosuccinate_synthetase"/>
</dbReference>
<dbReference type="InterPro" id="IPR027417">
    <property type="entry name" value="P-loop_NTPase"/>
</dbReference>
<dbReference type="NCBIfam" id="NF002223">
    <property type="entry name" value="PRK01117.1"/>
    <property type="match status" value="1"/>
</dbReference>
<dbReference type="NCBIfam" id="TIGR00184">
    <property type="entry name" value="purA"/>
    <property type="match status" value="1"/>
</dbReference>
<dbReference type="PANTHER" id="PTHR11846">
    <property type="entry name" value="ADENYLOSUCCINATE SYNTHETASE"/>
    <property type="match status" value="1"/>
</dbReference>
<dbReference type="PANTHER" id="PTHR11846:SF0">
    <property type="entry name" value="ADENYLOSUCCINATE SYNTHETASE"/>
    <property type="match status" value="1"/>
</dbReference>
<dbReference type="Pfam" id="PF00709">
    <property type="entry name" value="Adenylsucc_synt"/>
    <property type="match status" value="1"/>
</dbReference>
<dbReference type="SMART" id="SM00788">
    <property type="entry name" value="Adenylsucc_synt"/>
    <property type="match status" value="1"/>
</dbReference>
<dbReference type="SUPFAM" id="SSF52540">
    <property type="entry name" value="P-loop containing nucleoside triphosphate hydrolases"/>
    <property type="match status" value="1"/>
</dbReference>
<dbReference type="PROSITE" id="PS01266">
    <property type="entry name" value="ADENYLOSUCCIN_SYN_1"/>
    <property type="match status" value="1"/>
</dbReference>
<dbReference type="PROSITE" id="PS00513">
    <property type="entry name" value="ADENYLOSUCCIN_SYN_2"/>
    <property type="match status" value="1"/>
</dbReference>
<name>PURA_SINMW</name>
<reference key="1">
    <citation type="submission" date="2007-06" db="EMBL/GenBank/DDBJ databases">
        <title>Complete sequence of Sinorhizobium medicae WSM419 chromosome.</title>
        <authorList>
            <consortium name="US DOE Joint Genome Institute"/>
            <person name="Copeland A."/>
            <person name="Lucas S."/>
            <person name="Lapidus A."/>
            <person name="Barry K."/>
            <person name="Glavina del Rio T."/>
            <person name="Dalin E."/>
            <person name="Tice H."/>
            <person name="Pitluck S."/>
            <person name="Chain P."/>
            <person name="Malfatti S."/>
            <person name="Shin M."/>
            <person name="Vergez L."/>
            <person name="Schmutz J."/>
            <person name="Larimer F."/>
            <person name="Land M."/>
            <person name="Hauser L."/>
            <person name="Kyrpides N."/>
            <person name="Mikhailova N."/>
            <person name="Reeve W.G."/>
            <person name="Richardson P."/>
        </authorList>
    </citation>
    <scope>NUCLEOTIDE SEQUENCE [LARGE SCALE GENOMIC DNA]</scope>
    <source>
        <strain>WSM419</strain>
    </source>
</reference>
<proteinExistence type="inferred from homology"/>
<protein>
    <recommendedName>
        <fullName evidence="1">Adenylosuccinate synthetase</fullName>
        <shortName evidence="1">AMPSase</shortName>
        <shortName evidence="1">AdSS</shortName>
        <ecNumber evidence="1">6.3.4.4</ecNumber>
    </recommendedName>
    <alternativeName>
        <fullName evidence="1">IMP--aspartate ligase</fullName>
    </alternativeName>
</protein>